<accession>Q8FG48</accession>
<gene>
    <name evidence="1" type="primary">hisF</name>
    <name type="ordered locus">c2552</name>
</gene>
<name>HIS6_ECOL6</name>
<reference key="1">
    <citation type="journal article" date="2002" name="Proc. Natl. Acad. Sci. U.S.A.">
        <title>Extensive mosaic structure revealed by the complete genome sequence of uropathogenic Escherichia coli.</title>
        <authorList>
            <person name="Welch R.A."/>
            <person name="Burland V."/>
            <person name="Plunkett G. III"/>
            <person name="Redford P."/>
            <person name="Roesch P."/>
            <person name="Rasko D."/>
            <person name="Buckles E.L."/>
            <person name="Liou S.-R."/>
            <person name="Boutin A."/>
            <person name="Hackett J."/>
            <person name="Stroud D."/>
            <person name="Mayhew G.F."/>
            <person name="Rose D.J."/>
            <person name="Zhou S."/>
            <person name="Schwartz D.C."/>
            <person name="Perna N.T."/>
            <person name="Mobley H.L.T."/>
            <person name="Donnenberg M.S."/>
            <person name="Blattner F.R."/>
        </authorList>
    </citation>
    <scope>NUCLEOTIDE SEQUENCE [LARGE SCALE GENOMIC DNA]</scope>
    <source>
        <strain>CFT073 / ATCC 700928 / UPEC</strain>
    </source>
</reference>
<sequence>MLAKRIIPCLDVRDGQVVKGVQFRNHEIIGDIVPLAKRYAEEGADELVFYDITASSDGRVVDKSWVSRVAEVIDIPFCVAGGIKSLEDAAKILSFGADKISINSPALADPTLITRLADRFGVQCIVVGIDTWYDAETGKYHVNQYTGDESRTRVTQWETLDWVQEVQKRGAGEIVLNMMNQDGVRNGYDLKQLKKVREVCHVPLIASGGAGTMEHFLEAFRDADVDGALAASVFHKQIINIGELKAYLATQGVEIRIC</sequence>
<evidence type="ECO:0000255" key="1">
    <source>
        <dbReference type="HAMAP-Rule" id="MF_01013"/>
    </source>
</evidence>
<comment type="function">
    <text evidence="1">IGPS catalyzes the conversion of PRFAR and glutamine to IGP, AICAR and glutamate. The HisF subunit catalyzes the cyclization activity that produces IGP and AICAR from PRFAR using the ammonia provided by the HisH subunit.</text>
</comment>
<comment type="catalytic activity">
    <reaction evidence="1">
        <text>5-[(5-phospho-1-deoxy-D-ribulos-1-ylimino)methylamino]-1-(5-phospho-beta-D-ribosyl)imidazole-4-carboxamide + L-glutamine = D-erythro-1-(imidazol-4-yl)glycerol 3-phosphate + 5-amino-1-(5-phospho-beta-D-ribosyl)imidazole-4-carboxamide + L-glutamate + H(+)</text>
        <dbReference type="Rhea" id="RHEA:24793"/>
        <dbReference type="ChEBI" id="CHEBI:15378"/>
        <dbReference type="ChEBI" id="CHEBI:29985"/>
        <dbReference type="ChEBI" id="CHEBI:58278"/>
        <dbReference type="ChEBI" id="CHEBI:58359"/>
        <dbReference type="ChEBI" id="CHEBI:58475"/>
        <dbReference type="ChEBI" id="CHEBI:58525"/>
        <dbReference type="EC" id="4.3.2.10"/>
    </reaction>
</comment>
<comment type="pathway">
    <text evidence="1">Amino-acid biosynthesis; L-histidine biosynthesis; L-histidine from 5-phospho-alpha-D-ribose 1-diphosphate: step 5/9.</text>
</comment>
<comment type="subunit">
    <text evidence="1">Heterodimer of HisH and HisF.</text>
</comment>
<comment type="subcellular location">
    <subcellularLocation>
        <location evidence="1">Cytoplasm</location>
    </subcellularLocation>
</comment>
<comment type="similarity">
    <text evidence="1">Belongs to the HisA/HisF family.</text>
</comment>
<protein>
    <recommendedName>
        <fullName evidence="1">Imidazole glycerol phosphate synthase subunit HisF</fullName>
        <ecNumber evidence="1">4.3.2.10</ecNumber>
    </recommendedName>
    <alternativeName>
        <fullName evidence="1">IGP synthase cyclase subunit</fullName>
    </alternativeName>
    <alternativeName>
        <fullName evidence="1">IGP synthase subunit HisF</fullName>
    </alternativeName>
    <alternativeName>
        <fullName evidence="1">ImGP synthase subunit HisF</fullName>
        <shortName evidence="1">IGPS subunit HisF</shortName>
    </alternativeName>
</protein>
<proteinExistence type="inferred from homology"/>
<feature type="chain" id="PRO_0000142158" description="Imidazole glycerol phosphate synthase subunit HisF">
    <location>
        <begin position="1"/>
        <end position="258"/>
    </location>
</feature>
<feature type="active site" evidence="1">
    <location>
        <position position="11"/>
    </location>
</feature>
<feature type="active site" evidence="1">
    <location>
        <position position="130"/>
    </location>
</feature>
<organism>
    <name type="scientific">Escherichia coli O6:H1 (strain CFT073 / ATCC 700928 / UPEC)</name>
    <dbReference type="NCBI Taxonomy" id="199310"/>
    <lineage>
        <taxon>Bacteria</taxon>
        <taxon>Pseudomonadati</taxon>
        <taxon>Pseudomonadota</taxon>
        <taxon>Gammaproteobacteria</taxon>
        <taxon>Enterobacterales</taxon>
        <taxon>Enterobacteriaceae</taxon>
        <taxon>Escherichia</taxon>
    </lineage>
</organism>
<keyword id="KW-0028">Amino-acid biosynthesis</keyword>
<keyword id="KW-0963">Cytoplasm</keyword>
<keyword id="KW-0368">Histidine biosynthesis</keyword>
<keyword id="KW-0456">Lyase</keyword>
<keyword id="KW-1185">Reference proteome</keyword>
<dbReference type="EC" id="4.3.2.10" evidence="1"/>
<dbReference type="EMBL" id="AE014075">
    <property type="protein sequence ID" value="AAN81007.1"/>
    <property type="molecule type" value="Genomic_DNA"/>
</dbReference>
<dbReference type="RefSeq" id="WP_000880185.1">
    <property type="nucleotide sequence ID" value="NZ_CP051263.1"/>
</dbReference>
<dbReference type="SMR" id="Q8FG48"/>
<dbReference type="STRING" id="199310.c2552"/>
<dbReference type="KEGG" id="ecc:c2552"/>
<dbReference type="eggNOG" id="COG0107">
    <property type="taxonomic scope" value="Bacteria"/>
</dbReference>
<dbReference type="HOGENOM" id="CLU_048577_4_0_6"/>
<dbReference type="BioCyc" id="ECOL199310:C2552-MONOMER"/>
<dbReference type="UniPathway" id="UPA00031">
    <property type="reaction ID" value="UER00010"/>
</dbReference>
<dbReference type="Proteomes" id="UP000001410">
    <property type="component" value="Chromosome"/>
</dbReference>
<dbReference type="GO" id="GO:0005737">
    <property type="term" value="C:cytoplasm"/>
    <property type="evidence" value="ECO:0007669"/>
    <property type="project" value="UniProtKB-SubCell"/>
</dbReference>
<dbReference type="GO" id="GO:0000107">
    <property type="term" value="F:imidazoleglycerol-phosphate synthase activity"/>
    <property type="evidence" value="ECO:0007669"/>
    <property type="project" value="UniProtKB-UniRule"/>
</dbReference>
<dbReference type="GO" id="GO:0016829">
    <property type="term" value="F:lyase activity"/>
    <property type="evidence" value="ECO:0007669"/>
    <property type="project" value="UniProtKB-KW"/>
</dbReference>
<dbReference type="GO" id="GO:0000105">
    <property type="term" value="P:L-histidine biosynthetic process"/>
    <property type="evidence" value="ECO:0007669"/>
    <property type="project" value="UniProtKB-UniRule"/>
</dbReference>
<dbReference type="CDD" id="cd04731">
    <property type="entry name" value="HisF"/>
    <property type="match status" value="1"/>
</dbReference>
<dbReference type="FunFam" id="3.20.20.70:FF:000006">
    <property type="entry name" value="Imidazole glycerol phosphate synthase subunit HisF"/>
    <property type="match status" value="1"/>
</dbReference>
<dbReference type="Gene3D" id="3.20.20.70">
    <property type="entry name" value="Aldolase class I"/>
    <property type="match status" value="1"/>
</dbReference>
<dbReference type="HAMAP" id="MF_01013">
    <property type="entry name" value="HisF"/>
    <property type="match status" value="1"/>
</dbReference>
<dbReference type="InterPro" id="IPR013785">
    <property type="entry name" value="Aldolase_TIM"/>
</dbReference>
<dbReference type="InterPro" id="IPR006062">
    <property type="entry name" value="His_biosynth"/>
</dbReference>
<dbReference type="InterPro" id="IPR004651">
    <property type="entry name" value="HisF"/>
</dbReference>
<dbReference type="InterPro" id="IPR050064">
    <property type="entry name" value="IGPS_HisA/HisF"/>
</dbReference>
<dbReference type="InterPro" id="IPR011060">
    <property type="entry name" value="RibuloseP-bd_barrel"/>
</dbReference>
<dbReference type="NCBIfam" id="TIGR00735">
    <property type="entry name" value="hisF"/>
    <property type="match status" value="1"/>
</dbReference>
<dbReference type="PANTHER" id="PTHR21235:SF2">
    <property type="entry name" value="IMIDAZOLE GLYCEROL PHOSPHATE SYNTHASE HISHF"/>
    <property type="match status" value="1"/>
</dbReference>
<dbReference type="PANTHER" id="PTHR21235">
    <property type="entry name" value="IMIDAZOLE GLYCEROL PHOSPHATE SYNTHASE SUBUNIT HISF/H IGP SYNTHASE SUBUNIT HISF/H"/>
    <property type="match status" value="1"/>
</dbReference>
<dbReference type="Pfam" id="PF00977">
    <property type="entry name" value="His_biosynth"/>
    <property type="match status" value="1"/>
</dbReference>
<dbReference type="SUPFAM" id="SSF51366">
    <property type="entry name" value="Ribulose-phoshate binding barrel"/>
    <property type="match status" value="1"/>
</dbReference>